<keyword id="KW-0067">ATP-binding</keyword>
<keyword id="KW-0963">Cytoplasm</keyword>
<keyword id="KW-0418">Kinase</keyword>
<keyword id="KW-0444">Lipid biosynthesis</keyword>
<keyword id="KW-0443">Lipid metabolism</keyword>
<keyword id="KW-0460">Magnesium</keyword>
<keyword id="KW-0479">Metal-binding</keyword>
<keyword id="KW-0547">Nucleotide-binding</keyword>
<keyword id="KW-0594">Phospholipid biosynthesis</keyword>
<keyword id="KW-1208">Phospholipid metabolism</keyword>
<keyword id="KW-0808">Transferase</keyword>
<accession>Q48GV2</accession>
<organism>
    <name type="scientific">Pseudomonas savastanoi pv. phaseolicola (strain 1448A / Race 6)</name>
    <name type="common">Pseudomonas syringae pv. phaseolicola (strain 1448A / Race 6)</name>
    <dbReference type="NCBI Taxonomy" id="264730"/>
    <lineage>
        <taxon>Bacteria</taxon>
        <taxon>Pseudomonadati</taxon>
        <taxon>Pseudomonadota</taxon>
        <taxon>Gammaproteobacteria</taxon>
        <taxon>Pseudomonadales</taxon>
        <taxon>Pseudomonadaceae</taxon>
        <taxon>Pseudomonas</taxon>
    </lineage>
</organism>
<evidence type="ECO:0000255" key="1">
    <source>
        <dbReference type="HAMAP-Rule" id="MF_01377"/>
    </source>
</evidence>
<feature type="chain" id="PRO_0000292152" description="Probable lipid kinase YegS-like">
    <location>
        <begin position="1"/>
        <end position="305"/>
    </location>
</feature>
<feature type="domain" description="DAGKc" evidence="1">
    <location>
        <begin position="1"/>
        <end position="129"/>
    </location>
</feature>
<feature type="active site" description="Proton acceptor" evidence="1">
    <location>
        <position position="268"/>
    </location>
</feature>
<feature type="binding site" evidence="1">
    <location>
        <position position="39"/>
    </location>
    <ligand>
        <name>ATP</name>
        <dbReference type="ChEBI" id="CHEBI:30616"/>
    </ligand>
</feature>
<feature type="binding site" evidence="1">
    <location>
        <begin position="65"/>
        <end position="71"/>
    </location>
    <ligand>
        <name>ATP</name>
        <dbReference type="ChEBI" id="CHEBI:30616"/>
    </ligand>
</feature>
<feature type="binding site" evidence="1">
    <location>
        <position position="92"/>
    </location>
    <ligand>
        <name>ATP</name>
        <dbReference type="ChEBI" id="CHEBI:30616"/>
    </ligand>
</feature>
<feature type="binding site" evidence="1">
    <location>
        <position position="210"/>
    </location>
    <ligand>
        <name>Mg(2+)</name>
        <dbReference type="ChEBI" id="CHEBI:18420"/>
    </ligand>
</feature>
<feature type="binding site" evidence="1">
    <location>
        <position position="213"/>
    </location>
    <ligand>
        <name>Mg(2+)</name>
        <dbReference type="ChEBI" id="CHEBI:18420"/>
    </ligand>
</feature>
<feature type="binding site" evidence="1">
    <location>
        <position position="215"/>
    </location>
    <ligand>
        <name>Mg(2+)</name>
        <dbReference type="ChEBI" id="CHEBI:18420"/>
    </ligand>
</feature>
<reference key="1">
    <citation type="journal article" date="2005" name="J. Bacteriol.">
        <title>Whole-genome sequence analysis of Pseudomonas syringae pv. phaseolicola 1448A reveals divergence among pathovars in genes involved in virulence and transposition.</title>
        <authorList>
            <person name="Joardar V."/>
            <person name="Lindeberg M."/>
            <person name="Jackson R.W."/>
            <person name="Selengut J."/>
            <person name="Dodson R."/>
            <person name="Brinkac L.M."/>
            <person name="Daugherty S.C."/>
            <person name="DeBoy R.T."/>
            <person name="Durkin A.S."/>
            <person name="Gwinn Giglio M."/>
            <person name="Madupu R."/>
            <person name="Nelson W.C."/>
            <person name="Rosovitz M.J."/>
            <person name="Sullivan S.A."/>
            <person name="Crabtree J."/>
            <person name="Creasy T."/>
            <person name="Davidsen T.M."/>
            <person name="Haft D.H."/>
            <person name="Zafar N."/>
            <person name="Zhou L."/>
            <person name="Halpin R."/>
            <person name="Holley T."/>
            <person name="Khouri H.M."/>
            <person name="Feldblyum T.V."/>
            <person name="White O."/>
            <person name="Fraser C.M."/>
            <person name="Chatterjee A.K."/>
            <person name="Cartinhour S."/>
            <person name="Schneider D."/>
            <person name="Mansfield J.W."/>
            <person name="Collmer A."/>
            <person name="Buell R."/>
        </authorList>
    </citation>
    <scope>NUCLEOTIDE SEQUENCE [LARGE SCALE GENOMIC DNA]</scope>
    <source>
        <strain>1448A / Race 6</strain>
    </source>
</reference>
<protein>
    <recommendedName>
        <fullName evidence="1">Probable lipid kinase YegS-like</fullName>
        <ecNumber evidence="1">2.7.1.-</ecNumber>
    </recommendedName>
</protein>
<name>YEGS_PSE14</name>
<comment type="function">
    <text evidence="1">Probably phosphorylates lipids; the in vivo substrate is unknown.</text>
</comment>
<comment type="cofactor">
    <cofactor evidence="1">
        <name>Mg(2+)</name>
        <dbReference type="ChEBI" id="CHEBI:18420"/>
    </cofactor>
    <cofactor evidence="1">
        <name>Ca(2+)</name>
        <dbReference type="ChEBI" id="CHEBI:29108"/>
    </cofactor>
    <text evidence="1">Binds 1 Mg(2+) ion per subunit. Ca(2+) may be able to substitute.</text>
</comment>
<comment type="subcellular location">
    <subcellularLocation>
        <location evidence="1">Cytoplasm</location>
    </subcellularLocation>
</comment>
<comment type="similarity">
    <text evidence="1">Belongs to the diacylglycerol/lipid kinase family. YegS lipid kinase subfamily.</text>
</comment>
<sequence length="305" mass="32285">MTQRRAMLILHGKQALNEDVRDAVADKRKQGWELDVRLTWEAGDARRLVGEALAAGHRHIVAGGGDGTLRDIAEALALAETQASLTILPLGTANDFARAAGVPLEVSKALQLMDVAPRAVDLGEVGGKLFLNMATGGFGSQVTANTSEDLKKVLGGAAYLFTGLTRFSELHAAHGELTGPDFHWRGDLLALGIGNGRQAGGGHELCPTALADDGLLDISILPAPQEVVGTLRSLLEGGLGIDNMFIRTRLPWVELKSAQGLDINLDGEPLSGEDLRFEARPGALQVHLPADSPVLSRAPMLNRPD</sequence>
<gene>
    <name type="ordered locus">PSPPH_3221</name>
</gene>
<dbReference type="EC" id="2.7.1.-" evidence="1"/>
<dbReference type="EMBL" id="CP000058">
    <property type="protein sequence ID" value="AAZ37111.1"/>
    <property type="molecule type" value="Genomic_DNA"/>
</dbReference>
<dbReference type="SMR" id="Q48GV2"/>
<dbReference type="KEGG" id="psp:PSPPH_3221"/>
<dbReference type="eggNOG" id="COG1597">
    <property type="taxonomic scope" value="Bacteria"/>
</dbReference>
<dbReference type="HOGENOM" id="CLU_045532_1_1_6"/>
<dbReference type="Proteomes" id="UP000000551">
    <property type="component" value="Chromosome"/>
</dbReference>
<dbReference type="GO" id="GO:0005737">
    <property type="term" value="C:cytoplasm"/>
    <property type="evidence" value="ECO:0007669"/>
    <property type="project" value="UniProtKB-SubCell"/>
</dbReference>
<dbReference type="GO" id="GO:0005886">
    <property type="term" value="C:plasma membrane"/>
    <property type="evidence" value="ECO:0007669"/>
    <property type="project" value="TreeGrafter"/>
</dbReference>
<dbReference type="GO" id="GO:0005524">
    <property type="term" value="F:ATP binding"/>
    <property type="evidence" value="ECO:0007669"/>
    <property type="project" value="UniProtKB-UniRule"/>
</dbReference>
<dbReference type="GO" id="GO:0001727">
    <property type="term" value="F:lipid kinase activity"/>
    <property type="evidence" value="ECO:0007669"/>
    <property type="project" value="UniProtKB-UniRule"/>
</dbReference>
<dbReference type="GO" id="GO:0000287">
    <property type="term" value="F:magnesium ion binding"/>
    <property type="evidence" value="ECO:0007669"/>
    <property type="project" value="UniProtKB-UniRule"/>
</dbReference>
<dbReference type="GO" id="GO:0008654">
    <property type="term" value="P:phospholipid biosynthetic process"/>
    <property type="evidence" value="ECO:0007669"/>
    <property type="project" value="UniProtKB-UniRule"/>
</dbReference>
<dbReference type="Gene3D" id="2.60.200.40">
    <property type="match status" value="1"/>
</dbReference>
<dbReference type="Gene3D" id="3.40.50.10330">
    <property type="entry name" value="Probable inorganic polyphosphate/atp-NAD kinase, domain 1"/>
    <property type="match status" value="1"/>
</dbReference>
<dbReference type="HAMAP" id="MF_01377">
    <property type="entry name" value="YegS"/>
    <property type="match status" value="1"/>
</dbReference>
<dbReference type="InterPro" id="IPR017438">
    <property type="entry name" value="ATP-NAD_kinase_N"/>
</dbReference>
<dbReference type="InterPro" id="IPR005218">
    <property type="entry name" value="Diacylglycerol/lipid_kinase"/>
</dbReference>
<dbReference type="InterPro" id="IPR001206">
    <property type="entry name" value="Diacylglycerol_kinase_cat_dom"/>
</dbReference>
<dbReference type="InterPro" id="IPR022433">
    <property type="entry name" value="Lip_kinase_YegS"/>
</dbReference>
<dbReference type="InterPro" id="IPR050187">
    <property type="entry name" value="Lipid_Phosphate_FormReg"/>
</dbReference>
<dbReference type="InterPro" id="IPR016064">
    <property type="entry name" value="NAD/diacylglycerol_kinase_sf"/>
</dbReference>
<dbReference type="InterPro" id="IPR045540">
    <property type="entry name" value="YegS/DAGK_C"/>
</dbReference>
<dbReference type="NCBIfam" id="TIGR03702">
    <property type="entry name" value="lip_kinase_YegS"/>
    <property type="match status" value="1"/>
</dbReference>
<dbReference type="NCBIfam" id="NF009602">
    <property type="entry name" value="PRK13054.1"/>
    <property type="match status" value="1"/>
</dbReference>
<dbReference type="NCBIfam" id="TIGR00147">
    <property type="entry name" value="YegS/Rv2252/BmrU family lipid kinase"/>
    <property type="match status" value="1"/>
</dbReference>
<dbReference type="PANTHER" id="PTHR12358:SF106">
    <property type="entry name" value="LIPID KINASE YEGS"/>
    <property type="match status" value="1"/>
</dbReference>
<dbReference type="PANTHER" id="PTHR12358">
    <property type="entry name" value="SPHINGOSINE KINASE"/>
    <property type="match status" value="1"/>
</dbReference>
<dbReference type="Pfam" id="PF00781">
    <property type="entry name" value="DAGK_cat"/>
    <property type="match status" value="1"/>
</dbReference>
<dbReference type="Pfam" id="PF19279">
    <property type="entry name" value="YegS_C"/>
    <property type="match status" value="1"/>
</dbReference>
<dbReference type="SMART" id="SM00046">
    <property type="entry name" value="DAGKc"/>
    <property type="match status" value="1"/>
</dbReference>
<dbReference type="SUPFAM" id="SSF111331">
    <property type="entry name" value="NAD kinase/diacylglycerol kinase-like"/>
    <property type="match status" value="1"/>
</dbReference>
<dbReference type="PROSITE" id="PS50146">
    <property type="entry name" value="DAGK"/>
    <property type="match status" value="1"/>
</dbReference>
<proteinExistence type="inferred from homology"/>